<feature type="signal peptide" evidence="1">
    <location>
        <begin position="1"/>
        <end position="15"/>
    </location>
</feature>
<feature type="chain" id="PRO_1000072284" description="Flagellar L-ring protein">
    <location>
        <begin position="16"/>
        <end position="232"/>
    </location>
</feature>
<feature type="lipid moiety-binding region" description="N-palmitoyl cysteine" evidence="1">
    <location>
        <position position="16"/>
    </location>
</feature>
<feature type="lipid moiety-binding region" description="S-diacylglycerol cysteine" evidence="1">
    <location>
        <position position="16"/>
    </location>
</feature>
<dbReference type="EMBL" id="CP000814">
    <property type="protein sequence ID" value="ABV52254.1"/>
    <property type="molecule type" value="Genomic_DNA"/>
</dbReference>
<dbReference type="RefSeq" id="WP_002864738.1">
    <property type="nucleotide sequence ID" value="NC_009839.1"/>
</dbReference>
<dbReference type="SMR" id="A8FLB7"/>
<dbReference type="KEGG" id="cju:C8J_0655"/>
<dbReference type="HOGENOM" id="CLU_069313_1_1_7"/>
<dbReference type="GO" id="GO:0009427">
    <property type="term" value="C:bacterial-type flagellum basal body, distal rod, L ring"/>
    <property type="evidence" value="ECO:0007669"/>
    <property type="project" value="InterPro"/>
</dbReference>
<dbReference type="GO" id="GO:0009279">
    <property type="term" value="C:cell outer membrane"/>
    <property type="evidence" value="ECO:0007669"/>
    <property type="project" value="UniProtKB-SubCell"/>
</dbReference>
<dbReference type="GO" id="GO:0003774">
    <property type="term" value="F:cytoskeletal motor activity"/>
    <property type="evidence" value="ECO:0007669"/>
    <property type="project" value="InterPro"/>
</dbReference>
<dbReference type="GO" id="GO:0071973">
    <property type="term" value="P:bacterial-type flagellum-dependent cell motility"/>
    <property type="evidence" value="ECO:0007669"/>
    <property type="project" value="InterPro"/>
</dbReference>
<dbReference type="HAMAP" id="MF_00415">
    <property type="entry name" value="FlgH"/>
    <property type="match status" value="1"/>
</dbReference>
<dbReference type="InterPro" id="IPR000527">
    <property type="entry name" value="Flag_Lring"/>
</dbReference>
<dbReference type="NCBIfam" id="NF001303">
    <property type="entry name" value="PRK00249.1-3"/>
    <property type="match status" value="1"/>
</dbReference>
<dbReference type="PANTHER" id="PTHR34933">
    <property type="entry name" value="FLAGELLAR L-RING PROTEIN"/>
    <property type="match status" value="1"/>
</dbReference>
<dbReference type="PANTHER" id="PTHR34933:SF1">
    <property type="entry name" value="FLAGELLAR L-RING PROTEIN"/>
    <property type="match status" value="1"/>
</dbReference>
<dbReference type="Pfam" id="PF02107">
    <property type="entry name" value="FlgH"/>
    <property type="match status" value="1"/>
</dbReference>
<dbReference type="PRINTS" id="PR01008">
    <property type="entry name" value="FLGLRINGFLGH"/>
</dbReference>
<dbReference type="PROSITE" id="PS51257">
    <property type="entry name" value="PROKAR_LIPOPROTEIN"/>
    <property type="match status" value="1"/>
</dbReference>
<evidence type="ECO:0000255" key="1">
    <source>
        <dbReference type="HAMAP-Rule" id="MF_00415"/>
    </source>
</evidence>
<organism>
    <name type="scientific">Campylobacter jejuni subsp. jejuni serotype O:6 (strain 81116 / NCTC 11828)</name>
    <dbReference type="NCBI Taxonomy" id="407148"/>
    <lineage>
        <taxon>Bacteria</taxon>
        <taxon>Pseudomonadati</taxon>
        <taxon>Campylobacterota</taxon>
        <taxon>Epsilonproteobacteria</taxon>
        <taxon>Campylobacterales</taxon>
        <taxon>Campylobacteraceae</taxon>
        <taxon>Campylobacter</taxon>
    </lineage>
</organism>
<accession>A8FLB7</accession>
<reference key="1">
    <citation type="journal article" date="2007" name="J. Bacteriol.">
        <title>The complete genome sequence of Campylobacter jejuni strain 81116 (NCTC11828).</title>
        <authorList>
            <person name="Pearson B.M."/>
            <person name="Gaskin D.J.H."/>
            <person name="Segers R.P.A.M."/>
            <person name="Wells J.M."/>
            <person name="Nuijten P.J.M."/>
            <person name="van Vliet A.H.M."/>
        </authorList>
    </citation>
    <scope>NUCLEOTIDE SEQUENCE [LARGE SCALE GENOMIC DNA]</scope>
    <source>
        <strain>81116 / NCTC 11828</strain>
    </source>
</reference>
<name>FLGH_CAMJ8</name>
<sequence length="232" mass="25154">MKKVLFYVLPFAFFGCSATVDPQISMKPPAYVEELAPKQSNNVESAPGSLFGKGDNPLFSDKKAMNVNDLVTVVIQESTTQSTQANKATSRTNTSNLGGGALTGSSGVVANALNKVNAYSNIGFQTNSSNNYTGTGSQSRNESFNTTISTRVIKILSNGNYFIEGSRELLINGEKQIIQLSGVIRPYDIGQDNTIDSKYIADAKILYKTEGEVDRSTRKPWGSKVIEAIWPF</sequence>
<protein>
    <recommendedName>
        <fullName evidence="1">Flagellar L-ring protein</fullName>
    </recommendedName>
    <alternativeName>
        <fullName evidence="1">Basal body L-ring protein</fullName>
    </alternativeName>
</protein>
<comment type="function">
    <text evidence="1">Assembles around the rod to form the L-ring and probably protects the motor/basal body from shearing forces during rotation.</text>
</comment>
<comment type="subunit">
    <text evidence="1">The basal body constitutes a major portion of the flagellar organelle and consists of four rings (L,P,S, and M) mounted on a central rod.</text>
</comment>
<comment type="subcellular location">
    <subcellularLocation>
        <location evidence="1">Cell outer membrane</location>
        <topology evidence="1">Lipid-anchor</topology>
    </subcellularLocation>
    <subcellularLocation>
        <location evidence="1">Bacterial flagellum basal body</location>
    </subcellularLocation>
</comment>
<comment type="similarity">
    <text evidence="1">Belongs to the FlgH family.</text>
</comment>
<gene>
    <name evidence="1" type="primary">flgH</name>
    <name type="ordered locus">C8J_0655</name>
</gene>
<keyword id="KW-0975">Bacterial flagellum</keyword>
<keyword id="KW-0998">Cell outer membrane</keyword>
<keyword id="KW-0449">Lipoprotein</keyword>
<keyword id="KW-0472">Membrane</keyword>
<keyword id="KW-0564">Palmitate</keyword>
<keyword id="KW-0732">Signal</keyword>
<proteinExistence type="inferred from homology"/>